<keyword id="KW-0963">Cytoplasm</keyword>
<keyword id="KW-0271">Exosome</keyword>
<keyword id="KW-1185">Reference proteome</keyword>
<protein>
    <recommendedName>
        <fullName evidence="1">Exosome complex component Rrp42</fullName>
    </recommendedName>
</protein>
<proteinExistence type="inferred from homology"/>
<organism>
    <name type="scientific">Methanosarcina acetivorans (strain ATCC 35395 / DSM 2834 / JCM 12185 / C2A)</name>
    <dbReference type="NCBI Taxonomy" id="188937"/>
    <lineage>
        <taxon>Archaea</taxon>
        <taxon>Methanobacteriati</taxon>
        <taxon>Methanobacteriota</taxon>
        <taxon>Stenosarchaea group</taxon>
        <taxon>Methanomicrobia</taxon>
        <taxon>Methanosarcinales</taxon>
        <taxon>Methanosarcinaceae</taxon>
        <taxon>Methanosarcina</taxon>
    </lineage>
</organism>
<comment type="function">
    <text evidence="1">Non-catalytic component of the exosome, which is a complex involved in RNA degradation. Contributes to the structuring of the Rrp41 active site.</text>
</comment>
<comment type="subunit">
    <text evidence="1">Component of the archaeal exosome complex. Forms a hexameric ring-like arrangement composed of 3 Rrp41-Rrp42 heterodimers. The hexameric ring associates with a trimer of Rrp4 and/or Csl4 subunits.</text>
</comment>
<comment type="subcellular location">
    <subcellularLocation>
        <location evidence="1">Cytoplasm</location>
    </subcellularLocation>
</comment>
<comment type="similarity">
    <text evidence="1">Belongs to the RNase PH family. Rrp42 subfamily.</text>
</comment>
<accession>Q8TGX5</accession>
<dbReference type="EMBL" id="AE010299">
    <property type="protein sequence ID" value="AAM05182.1"/>
    <property type="molecule type" value="Genomic_DNA"/>
</dbReference>
<dbReference type="RefSeq" id="WP_011021779.1">
    <property type="nucleotide sequence ID" value="NC_003552.1"/>
</dbReference>
<dbReference type="SMR" id="Q8TGX5"/>
<dbReference type="STRING" id="188937.MA_1776"/>
<dbReference type="EnsemblBacteria" id="AAM05182">
    <property type="protein sequence ID" value="AAM05182"/>
    <property type="gene ID" value="MA_1776"/>
</dbReference>
<dbReference type="GeneID" id="1473665"/>
<dbReference type="KEGG" id="mac:MA_1776"/>
<dbReference type="HOGENOM" id="CLU_038194_0_0_2"/>
<dbReference type="InParanoid" id="Q8TGX5"/>
<dbReference type="OrthoDB" id="30932at2157"/>
<dbReference type="PhylomeDB" id="Q8TGX5"/>
<dbReference type="Proteomes" id="UP000002487">
    <property type="component" value="Chromosome"/>
</dbReference>
<dbReference type="GO" id="GO:0000177">
    <property type="term" value="C:cytoplasmic exosome (RNase complex)"/>
    <property type="evidence" value="ECO:0000318"/>
    <property type="project" value="GO_Central"/>
</dbReference>
<dbReference type="GO" id="GO:0035925">
    <property type="term" value="F:mRNA 3'-UTR AU-rich region binding"/>
    <property type="evidence" value="ECO:0000318"/>
    <property type="project" value="GO_Central"/>
</dbReference>
<dbReference type="GO" id="GO:0016075">
    <property type="term" value="P:rRNA catabolic process"/>
    <property type="evidence" value="ECO:0000318"/>
    <property type="project" value="GO_Central"/>
</dbReference>
<dbReference type="CDD" id="cd11365">
    <property type="entry name" value="RNase_PH_archRRP42"/>
    <property type="match status" value="1"/>
</dbReference>
<dbReference type="FunFam" id="3.30.230.70:FF:000017">
    <property type="entry name" value="Exosome complex component Rrp42"/>
    <property type="match status" value="1"/>
</dbReference>
<dbReference type="Gene3D" id="3.30.230.70">
    <property type="entry name" value="GHMP Kinase, N-terminal domain"/>
    <property type="match status" value="1"/>
</dbReference>
<dbReference type="HAMAP" id="MF_00622">
    <property type="entry name" value="Exosome_Rrp42"/>
    <property type="match status" value="1"/>
</dbReference>
<dbReference type="InterPro" id="IPR001247">
    <property type="entry name" value="ExoRNase_PH_dom1"/>
</dbReference>
<dbReference type="InterPro" id="IPR015847">
    <property type="entry name" value="ExoRNase_PH_dom2"/>
</dbReference>
<dbReference type="InterPro" id="IPR036345">
    <property type="entry name" value="ExoRNase_PH_dom2_sf"/>
</dbReference>
<dbReference type="InterPro" id="IPR050590">
    <property type="entry name" value="Exosome_comp_Rrp42_subfam"/>
</dbReference>
<dbReference type="InterPro" id="IPR027408">
    <property type="entry name" value="PNPase/RNase_PH_dom_sf"/>
</dbReference>
<dbReference type="InterPro" id="IPR020568">
    <property type="entry name" value="Ribosomal_Su5_D2-typ_SF"/>
</dbReference>
<dbReference type="InterPro" id="IPR020869">
    <property type="entry name" value="Rrp42_archaea"/>
</dbReference>
<dbReference type="NCBIfam" id="NF003282">
    <property type="entry name" value="PRK04282.1-1"/>
    <property type="match status" value="1"/>
</dbReference>
<dbReference type="PANTHER" id="PTHR11097:SF8">
    <property type="entry name" value="EXOSOME COMPLEX COMPONENT RRP42"/>
    <property type="match status" value="1"/>
</dbReference>
<dbReference type="PANTHER" id="PTHR11097">
    <property type="entry name" value="EXOSOME COMPLEX EXONUCLEASE RIBOSOMAL RNA PROCESSING PROTEIN"/>
    <property type="match status" value="1"/>
</dbReference>
<dbReference type="Pfam" id="PF01138">
    <property type="entry name" value="RNase_PH"/>
    <property type="match status" value="1"/>
</dbReference>
<dbReference type="Pfam" id="PF03725">
    <property type="entry name" value="RNase_PH_C"/>
    <property type="match status" value="1"/>
</dbReference>
<dbReference type="SUPFAM" id="SSF55666">
    <property type="entry name" value="Ribonuclease PH domain 2-like"/>
    <property type="match status" value="1"/>
</dbReference>
<dbReference type="SUPFAM" id="SSF54211">
    <property type="entry name" value="Ribosomal protein S5 domain 2-like"/>
    <property type="match status" value="1"/>
</dbReference>
<feature type="chain" id="PRO_0000139997" description="Exosome complex component Rrp42">
    <location>
        <begin position="1"/>
        <end position="266"/>
    </location>
</feature>
<reference key="1">
    <citation type="journal article" date="2002" name="Genome Res.">
        <title>The genome of Methanosarcina acetivorans reveals extensive metabolic and physiological diversity.</title>
        <authorList>
            <person name="Galagan J.E."/>
            <person name="Nusbaum C."/>
            <person name="Roy A."/>
            <person name="Endrizzi M.G."/>
            <person name="Macdonald P."/>
            <person name="FitzHugh W."/>
            <person name="Calvo S."/>
            <person name="Engels R."/>
            <person name="Smirnov S."/>
            <person name="Atnoor D."/>
            <person name="Brown A."/>
            <person name="Allen N."/>
            <person name="Naylor J."/>
            <person name="Stange-Thomann N."/>
            <person name="DeArellano K."/>
            <person name="Johnson R."/>
            <person name="Linton L."/>
            <person name="McEwan P."/>
            <person name="McKernan K."/>
            <person name="Talamas J."/>
            <person name="Tirrell A."/>
            <person name="Ye W."/>
            <person name="Zimmer A."/>
            <person name="Barber R.D."/>
            <person name="Cann I."/>
            <person name="Graham D.E."/>
            <person name="Grahame D.A."/>
            <person name="Guss A.M."/>
            <person name="Hedderich R."/>
            <person name="Ingram-Smith C."/>
            <person name="Kuettner H.C."/>
            <person name="Krzycki J.A."/>
            <person name="Leigh J.A."/>
            <person name="Li W."/>
            <person name="Liu J."/>
            <person name="Mukhopadhyay B."/>
            <person name="Reeve J.N."/>
            <person name="Smith K."/>
            <person name="Springer T.A."/>
            <person name="Umayam L.A."/>
            <person name="White O."/>
            <person name="White R.H."/>
            <person name="de Macario E.C."/>
            <person name="Ferry J.G."/>
            <person name="Jarrell K.F."/>
            <person name="Jing H."/>
            <person name="Macario A.J.L."/>
            <person name="Paulsen I.T."/>
            <person name="Pritchett M."/>
            <person name="Sowers K.R."/>
            <person name="Swanson R.V."/>
            <person name="Zinder S.H."/>
            <person name="Lander E."/>
            <person name="Metcalf W.W."/>
            <person name="Birren B."/>
        </authorList>
    </citation>
    <scope>NUCLEOTIDE SEQUENCE [LARGE SCALE GENOMIC DNA]</scope>
    <source>
        <strain>ATCC 35395 / DSM 2834 / JCM 12185 / C2A</strain>
    </source>
</reference>
<gene>
    <name evidence="1" type="primary">rrp42</name>
    <name type="ordered locus">MA_1776</name>
</gene>
<name>RRP42_METAC</name>
<sequence length="266" mass="28719">MKKMSEIIATLKKDYIYNLMIKGKRQDGRGFKDFRDLKLETNVIVKAEGSAKVTLGNTQVLVGVKLQTGTPFPDSQDEGVIITNLELNPIASPEFEPGPPREEAIEMARVVDRGIRESGAIDIKKLCITVGESVWIVFIDVHVLNDDGNIIDASCLAAIAALMTTMVPNEQQGLGEDVPLAMKEMPVGITIAKIGSKLMVDPSLDEEAVCETKLTIVSSSDGSVAGMQKMGISPLTEAELFEAIDLALEKAAELRGLYLEGLAKSE</sequence>
<evidence type="ECO:0000255" key="1">
    <source>
        <dbReference type="HAMAP-Rule" id="MF_00622"/>
    </source>
</evidence>